<dbReference type="EC" id="3.1.-.-" evidence="2"/>
<dbReference type="EMBL" id="CR860912">
    <property type="protein sequence ID" value="CAH93017.1"/>
    <property type="molecule type" value="mRNA"/>
</dbReference>
<dbReference type="RefSeq" id="NP_001126783.1">
    <property type="nucleotide sequence ID" value="NM_001133311.1"/>
</dbReference>
<dbReference type="SMR" id="Q5R5E9"/>
<dbReference type="FunCoup" id="Q5R5E9">
    <property type="interactions" value="238"/>
</dbReference>
<dbReference type="STRING" id="9601.ENSPPYP00000002456"/>
<dbReference type="GeneID" id="100173787"/>
<dbReference type="KEGG" id="pon:100173787"/>
<dbReference type="CTD" id="9317"/>
<dbReference type="eggNOG" id="ENOG502QQQR">
    <property type="taxonomic scope" value="Eukaryota"/>
</dbReference>
<dbReference type="InParanoid" id="Q5R5E9"/>
<dbReference type="OrthoDB" id="9998343at2759"/>
<dbReference type="Proteomes" id="UP000001595">
    <property type="component" value="Unplaced"/>
</dbReference>
<dbReference type="GO" id="GO:0005829">
    <property type="term" value="C:cytosol"/>
    <property type="evidence" value="ECO:0000250"/>
    <property type="project" value="UniProtKB"/>
</dbReference>
<dbReference type="GO" id="GO:0141215">
    <property type="term" value="F:N-acetyltaurine hydrolase activity"/>
    <property type="evidence" value="ECO:0000250"/>
    <property type="project" value="UniProtKB"/>
</dbReference>
<dbReference type="GO" id="GO:0008270">
    <property type="term" value="F:zinc ion binding"/>
    <property type="evidence" value="ECO:0007669"/>
    <property type="project" value="InterPro"/>
</dbReference>
<dbReference type="GO" id="GO:0009056">
    <property type="term" value="P:catabolic process"/>
    <property type="evidence" value="ECO:0007669"/>
    <property type="project" value="InterPro"/>
</dbReference>
<dbReference type="GO" id="GO:0032098">
    <property type="term" value="P:regulation of appetite"/>
    <property type="evidence" value="ECO:0000250"/>
    <property type="project" value="UniProtKB"/>
</dbReference>
<dbReference type="GO" id="GO:0019530">
    <property type="term" value="P:taurine metabolic process"/>
    <property type="evidence" value="ECO:0000250"/>
    <property type="project" value="UniProtKB"/>
</dbReference>
<dbReference type="CDD" id="cd00530">
    <property type="entry name" value="PTE"/>
    <property type="match status" value="1"/>
</dbReference>
<dbReference type="FunFam" id="3.20.20.140:FF:000058">
    <property type="entry name" value="Phosphotriesterase-related protein"/>
    <property type="match status" value="1"/>
</dbReference>
<dbReference type="Gene3D" id="3.20.20.140">
    <property type="entry name" value="Metal-dependent hydrolases"/>
    <property type="match status" value="1"/>
</dbReference>
<dbReference type="InterPro" id="IPR017947">
    <property type="entry name" value="AryldialkylPase_Zn-BS"/>
</dbReference>
<dbReference type="InterPro" id="IPR032466">
    <property type="entry name" value="Metal_Hydrolase"/>
</dbReference>
<dbReference type="InterPro" id="IPR001559">
    <property type="entry name" value="Phosphotriesterase"/>
</dbReference>
<dbReference type="PANTHER" id="PTHR10819">
    <property type="entry name" value="PHOSPHOTRIESTERASE-RELATED"/>
    <property type="match status" value="1"/>
</dbReference>
<dbReference type="PANTHER" id="PTHR10819:SF3">
    <property type="entry name" value="PHOSPHOTRIESTERASE-RELATED PROTEIN"/>
    <property type="match status" value="1"/>
</dbReference>
<dbReference type="Pfam" id="PF02126">
    <property type="entry name" value="PTE"/>
    <property type="match status" value="1"/>
</dbReference>
<dbReference type="SUPFAM" id="SSF51556">
    <property type="entry name" value="Metallo-dependent hydrolases"/>
    <property type="match status" value="1"/>
</dbReference>
<dbReference type="PROSITE" id="PS01322">
    <property type="entry name" value="PHOSPHOTRIESTERASE_1"/>
    <property type="match status" value="1"/>
</dbReference>
<dbReference type="PROSITE" id="PS51347">
    <property type="entry name" value="PHOSPHOTRIESTERASE_2"/>
    <property type="match status" value="1"/>
</dbReference>
<comment type="function">
    <text evidence="2">N-acetyltaurine hydrolase that regulates feeding by catalyzing the hydrolysis of N-acetyltaurine into taurine and acetate. N-acetyltaurine has anorexigenic and anti-obesity effects that are dependent on GFRAL receptor and GDF15. PTER also acts on other N-acetyl amino acids (Met, Ile, Leu, Val) and N-propionyltaurine, but at lower rates.</text>
</comment>
<comment type="catalytic activity">
    <reaction evidence="2">
        <text>N-acetyltaurine + H2O = taurine + acetate</text>
        <dbReference type="Rhea" id="RHEA:81107"/>
        <dbReference type="ChEBI" id="CHEBI:15377"/>
        <dbReference type="ChEBI" id="CHEBI:30089"/>
        <dbReference type="ChEBI" id="CHEBI:133737"/>
        <dbReference type="ChEBI" id="CHEBI:507393"/>
    </reaction>
    <physiologicalReaction direction="left-to-right" evidence="2">
        <dbReference type="Rhea" id="RHEA:81108"/>
    </physiologicalReaction>
</comment>
<comment type="catalytic activity">
    <reaction evidence="2">
        <text>N-propanoyltaurine + H2O = propanoate + taurine</text>
        <dbReference type="Rhea" id="RHEA:81111"/>
        <dbReference type="ChEBI" id="CHEBI:15377"/>
        <dbReference type="ChEBI" id="CHEBI:17272"/>
        <dbReference type="ChEBI" id="CHEBI:231795"/>
        <dbReference type="ChEBI" id="CHEBI:507393"/>
    </reaction>
    <physiologicalReaction direction="left-to-right" evidence="2">
        <dbReference type="Rhea" id="RHEA:81112"/>
    </physiologicalReaction>
</comment>
<comment type="catalytic activity">
    <reaction evidence="2">
        <text>N-acetyl-L-methionine + H2O = L-methionine + acetate</text>
        <dbReference type="Rhea" id="RHEA:67440"/>
        <dbReference type="ChEBI" id="CHEBI:15377"/>
        <dbReference type="ChEBI" id="CHEBI:30089"/>
        <dbReference type="ChEBI" id="CHEBI:57844"/>
        <dbReference type="ChEBI" id="CHEBI:71670"/>
    </reaction>
    <physiologicalReaction direction="left-to-right" evidence="2">
        <dbReference type="Rhea" id="RHEA:67441"/>
    </physiologicalReaction>
</comment>
<comment type="catalytic activity">
    <reaction evidence="2">
        <text>N-acetyl-L-isoleucine + H2O = L-isoleucine + acetate</text>
        <dbReference type="Rhea" id="RHEA:81119"/>
        <dbReference type="ChEBI" id="CHEBI:15377"/>
        <dbReference type="ChEBI" id="CHEBI:30089"/>
        <dbReference type="ChEBI" id="CHEBI:58045"/>
        <dbReference type="ChEBI" id="CHEBI:133735"/>
    </reaction>
    <physiologicalReaction direction="left-to-right" evidence="2">
        <dbReference type="Rhea" id="RHEA:81120"/>
    </physiologicalReaction>
</comment>
<comment type="catalytic activity">
    <reaction evidence="2">
        <text>N-acetyl-L-leucine + H2O = L-leucine + acetate</text>
        <dbReference type="Rhea" id="RHEA:81115"/>
        <dbReference type="ChEBI" id="CHEBI:15377"/>
        <dbReference type="ChEBI" id="CHEBI:30089"/>
        <dbReference type="ChEBI" id="CHEBI:57427"/>
        <dbReference type="ChEBI" id="CHEBI:58270"/>
    </reaction>
    <physiologicalReaction direction="left-to-right" evidence="2">
        <dbReference type="Rhea" id="RHEA:81116"/>
    </physiologicalReaction>
</comment>
<comment type="catalytic activity">
    <reaction evidence="2">
        <text>N-acetyl-L-valine + H2O = L-valine + acetate</text>
        <dbReference type="Rhea" id="RHEA:81123"/>
        <dbReference type="ChEBI" id="CHEBI:15377"/>
        <dbReference type="ChEBI" id="CHEBI:30089"/>
        <dbReference type="ChEBI" id="CHEBI:57762"/>
        <dbReference type="ChEBI" id="CHEBI:133716"/>
    </reaction>
    <physiologicalReaction direction="left-to-right" evidence="2">
        <dbReference type="Rhea" id="RHEA:81124"/>
    </physiologicalReaction>
</comment>
<comment type="cofactor">
    <cofactor evidence="1">
        <name>a divalent metal cation</name>
        <dbReference type="ChEBI" id="CHEBI:60240"/>
    </cofactor>
    <text evidence="1">Binds 2 divalent metal cations per subunit.</text>
</comment>
<comment type="subcellular location">
    <subcellularLocation>
        <location evidence="2">Cytoplasm</location>
        <location evidence="2">Cytosol</location>
    </subcellularLocation>
</comment>
<comment type="similarity">
    <text evidence="3">Belongs to the metallo-dependent hydrolases superfamily. Phosphotriesterase family.</text>
</comment>
<accession>Q5R5E9</accession>
<sequence>MSSLSGKVQTVLGLVEPSKLGRTLTHEHLAMTFDCCYCPPPPCQEAISKEPIVMKNLYWIQKNAYSHKENLQLNQETEAIKEELLYFKANGGGALVENTTTGISRDTQTLKRLAEETGVHIISGAGFYVDATHSSETRAMSVEQLTDVLMNGILHGADGTSIKCGVIGEIGCSWPLTESERKVLQATAHAQAQLGCPVIIHPGRSSRAPFQIIRILQEAGADISKTVMSHLDRTILDKKELLEFAQLGCYSEYDLFGTELLHYQLGPDIDMPDDNKRIRRVRLLVEEGYEDRILVAHDIHTKTRLMKYGGHGYSHILTNVVPKMLLRGITENVLDKILIENPKQWLTFK</sequence>
<proteinExistence type="evidence at transcript level"/>
<organism>
    <name type="scientific">Pongo abelii</name>
    <name type="common">Sumatran orangutan</name>
    <name type="synonym">Pongo pygmaeus abelii</name>
    <dbReference type="NCBI Taxonomy" id="9601"/>
    <lineage>
        <taxon>Eukaryota</taxon>
        <taxon>Metazoa</taxon>
        <taxon>Chordata</taxon>
        <taxon>Craniata</taxon>
        <taxon>Vertebrata</taxon>
        <taxon>Euteleostomi</taxon>
        <taxon>Mammalia</taxon>
        <taxon>Eutheria</taxon>
        <taxon>Euarchontoglires</taxon>
        <taxon>Primates</taxon>
        <taxon>Haplorrhini</taxon>
        <taxon>Catarrhini</taxon>
        <taxon>Hominidae</taxon>
        <taxon>Pongo</taxon>
    </lineage>
</organism>
<protein>
    <recommendedName>
        <fullName evidence="4">N-acetyltaurine hydrolase</fullName>
        <ecNumber evidence="2">3.1.-.-</ecNumber>
    </recommendedName>
    <alternativeName>
        <fullName evidence="2">Phosphotriesterase-related protein</fullName>
    </alternativeName>
</protein>
<name>PTER_PONAB</name>
<evidence type="ECO:0000250" key="1">
    <source>
        <dbReference type="UniProtKB" id="P45548"/>
    </source>
</evidence>
<evidence type="ECO:0000250" key="2">
    <source>
        <dbReference type="UniProtKB" id="Q60866"/>
    </source>
</evidence>
<evidence type="ECO:0000255" key="3">
    <source>
        <dbReference type="PROSITE-ProRule" id="PRU00679"/>
    </source>
</evidence>
<evidence type="ECO:0000305" key="4"/>
<gene>
    <name evidence="2" type="primary">PTER</name>
</gene>
<reference key="1">
    <citation type="submission" date="2004-11" db="EMBL/GenBank/DDBJ databases">
        <authorList>
            <consortium name="The German cDNA consortium"/>
        </authorList>
    </citation>
    <scope>NUCLEOTIDE SEQUENCE [LARGE SCALE MRNA]</scope>
    <source>
        <tissue>Kidney</tissue>
    </source>
</reference>
<keyword id="KW-0963">Cytoplasm</keyword>
<keyword id="KW-0378">Hydrolase</keyword>
<keyword id="KW-0479">Metal-binding</keyword>
<keyword id="KW-1185">Reference proteome</keyword>
<feature type="chain" id="PRO_0000388666" description="N-acetyltaurine hydrolase">
    <location>
        <begin position="1"/>
        <end position="349"/>
    </location>
</feature>
<feature type="binding site" evidence="1">
    <location>
        <position position="26"/>
    </location>
    <ligand>
        <name>a divalent metal cation</name>
        <dbReference type="ChEBI" id="CHEBI:60240"/>
        <label>1</label>
    </ligand>
</feature>
<feature type="binding site" evidence="1">
    <location>
        <position position="28"/>
    </location>
    <ligand>
        <name>a divalent metal cation</name>
        <dbReference type="ChEBI" id="CHEBI:60240"/>
        <label>1</label>
    </ligand>
</feature>
<feature type="binding site" evidence="1">
    <location>
        <position position="169"/>
    </location>
    <ligand>
        <name>a divalent metal cation</name>
        <dbReference type="ChEBI" id="CHEBI:60240"/>
        <label>1</label>
    </ligand>
</feature>
<feature type="binding site" evidence="1">
    <location>
        <position position="169"/>
    </location>
    <ligand>
        <name>a divalent metal cation</name>
        <dbReference type="ChEBI" id="CHEBI:60240"/>
        <label>2</label>
    </ligand>
</feature>
<feature type="binding site" evidence="1">
    <location>
        <position position="201"/>
    </location>
    <ligand>
        <name>a divalent metal cation</name>
        <dbReference type="ChEBI" id="CHEBI:60240"/>
        <label>2</label>
    </ligand>
</feature>
<feature type="binding site" evidence="1">
    <location>
        <position position="230"/>
    </location>
    <ligand>
        <name>a divalent metal cation</name>
        <dbReference type="ChEBI" id="CHEBI:60240"/>
        <label>2</label>
    </ligand>
</feature>
<feature type="binding site" evidence="1">
    <location>
        <position position="298"/>
    </location>
    <ligand>
        <name>a divalent metal cation</name>
        <dbReference type="ChEBI" id="CHEBI:60240"/>
        <label>1</label>
    </ligand>
</feature>